<sequence>MHVAHLSLVDYRSYPTLELDLRPGTTTFVGLNGQGKTNLVEAIGYVATLGSHRVSGDAPLVRQGAERAVVRAQLERGGRRALVELEITPGKANRARLNGNPVRRTRDVLGVLRTVLFAPEDLALVKGDPGERRRYLDELLVTRWPRIAGVRADYDRILRQRTALLKSAGSAMRSGRADTHTLDVWDEHLATTGAELLSARLALLADLRSPTDSAYRAVSGGQGDLELGYRSSLPLLAEGVATTPGGEAPTRDALREALLASMLEQRKSELDRGVCLVGPHRDDLVLTLGGMPAKGYASHGESWSVALGLRLASYRLLLADDEVDDPGGPVLVLDDVFAELDAGRRERLSEVVADAEQVLVTAAVPEDVPAALRGEHTDRVHVTSGAAVRGD</sequence>
<reference key="1">
    <citation type="journal article" date="2008" name="PLoS ONE">
        <title>Survival in nuclear waste, extreme resistance, and potential applications gleaned from the genome sequence of Kineococcus radiotolerans SRS30216.</title>
        <authorList>
            <person name="Bagwell C.E."/>
            <person name="Bhat S."/>
            <person name="Hawkins G.M."/>
            <person name="Smith B.W."/>
            <person name="Biswas T."/>
            <person name="Hoover T.R."/>
            <person name="Saunders E."/>
            <person name="Han C.S."/>
            <person name="Tsodikov O.V."/>
            <person name="Shimkets L.J."/>
        </authorList>
    </citation>
    <scope>NUCLEOTIDE SEQUENCE [LARGE SCALE GENOMIC DNA]</scope>
    <source>
        <strain>ATCC BAA-149 / DSM 14245 / SRS30216</strain>
    </source>
</reference>
<evidence type="ECO:0000255" key="1">
    <source>
        <dbReference type="HAMAP-Rule" id="MF_00365"/>
    </source>
</evidence>
<comment type="function">
    <text evidence="1">The RecF protein is involved in DNA metabolism; it is required for DNA replication and normal SOS inducibility. RecF binds preferentially to single-stranded, linear DNA. It also seems to bind ATP.</text>
</comment>
<comment type="subcellular location">
    <subcellularLocation>
        <location evidence="1">Cytoplasm</location>
    </subcellularLocation>
</comment>
<comment type="similarity">
    <text evidence="1">Belongs to the RecF family.</text>
</comment>
<proteinExistence type="inferred from homology"/>
<keyword id="KW-0067">ATP-binding</keyword>
<keyword id="KW-0963">Cytoplasm</keyword>
<keyword id="KW-0227">DNA damage</keyword>
<keyword id="KW-0234">DNA repair</keyword>
<keyword id="KW-0235">DNA replication</keyword>
<keyword id="KW-0238">DNA-binding</keyword>
<keyword id="KW-0547">Nucleotide-binding</keyword>
<keyword id="KW-1185">Reference proteome</keyword>
<keyword id="KW-0742">SOS response</keyword>
<protein>
    <recommendedName>
        <fullName evidence="1">DNA replication and repair protein RecF</fullName>
    </recommendedName>
</protein>
<name>RECF_KINRD</name>
<feature type="chain" id="PRO_1000079590" description="DNA replication and repair protein RecF">
    <location>
        <begin position="1"/>
        <end position="391"/>
    </location>
</feature>
<feature type="binding site" evidence="1">
    <location>
        <begin position="30"/>
        <end position="37"/>
    </location>
    <ligand>
        <name>ATP</name>
        <dbReference type="ChEBI" id="CHEBI:30616"/>
    </ligand>
</feature>
<gene>
    <name evidence="1" type="primary">recF</name>
    <name type="ordered locus">Krad_0004</name>
</gene>
<dbReference type="EMBL" id="CP000750">
    <property type="protein sequence ID" value="ABS01496.1"/>
    <property type="molecule type" value="Genomic_DNA"/>
</dbReference>
<dbReference type="RefSeq" id="WP_012085688.1">
    <property type="nucleotide sequence ID" value="NC_009664.2"/>
</dbReference>
<dbReference type="SMR" id="A6W3V7"/>
<dbReference type="STRING" id="266940.Krad_0004"/>
<dbReference type="KEGG" id="kra:Krad_0004"/>
<dbReference type="eggNOG" id="COG1195">
    <property type="taxonomic scope" value="Bacteria"/>
</dbReference>
<dbReference type="HOGENOM" id="CLU_040267_1_1_11"/>
<dbReference type="OrthoDB" id="9803889at2"/>
<dbReference type="Proteomes" id="UP000001116">
    <property type="component" value="Chromosome"/>
</dbReference>
<dbReference type="GO" id="GO:0005737">
    <property type="term" value="C:cytoplasm"/>
    <property type="evidence" value="ECO:0007669"/>
    <property type="project" value="UniProtKB-SubCell"/>
</dbReference>
<dbReference type="GO" id="GO:0005524">
    <property type="term" value="F:ATP binding"/>
    <property type="evidence" value="ECO:0007669"/>
    <property type="project" value="UniProtKB-UniRule"/>
</dbReference>
<dbReference type="GO" id="GO:0003697">
    <property type="term" value="F:single-stranded DNA binding"/>
    <property type="evidence" value="ECO:0007669"/>
    <property type="project" value="UniProtKB-UniRule"/>
</dbReference>
<dbReference type="GO" id="GO:0006260">
    <property type="term" value="P:DNA replication"/>
    <property type="evidence" value="ECO:0007669"/>
    <property type="project" value="UniProtKB-UniRule"/>
</dbReference>
<dbReference type="GO" id="GO:0000731">
    <property type="term" value="P:DNA synthesis involved in DNA repair"/>
    <property type="evidence" value="ECO:0007669"/>
    <property type="project" value="TreeGrafter"/>
</dbReference>
<dbReference type="GO" id="GO:0006302">
    <property type="term" value="P:double-strand break repair"/>
    <property type="evidence" value="ECO:0007669"/>
    <property type="project" value="TreeGrafter"/>
</dbReference>
<dbReference type="GO" id="GO:0009432">
    <property type="term" value="P:SOS response"/>
    <property type="evidence" value="ECO:0007669"/>
    <property type="project" value="UniProtKB-UniRule"/>
</dbReference>
<dbReference type="CDD" id="cd03242">
    <property type="entry name" value="ABC_RecF"/>
    <property type="match status" value="1"/>
</dbReference>
<dbReference type="Gene3D" id="3.40.50.300">
    <property type="entry name" value="P-loop containing nucleotide triphosphate hydrolases"/>
    <property type="match status" value="1"/>
</dbReference>
<dbReference type="Gene3D" id="1.20.1050.90">
    <property type="entry name" value="RecF/RecN/SMC, N-terminal domain"/>
    <property type="match status" value="1"/>
</dbReference>
<dbReference type="HAMAP" id="MF_00365">
    <property type="entry name" value="RecF"/>
    <property type="match status" value="1"/>
</dbReference>
<dbReference type="InterPro" id="IPR001238">
    <property type="entry name" value="DNA-binding_RecF"/>
</dbReference>
<dbReference type="InterPro" id="IPR018078">
    <property type="entry name" value="DNA-binding_RecF_CS"/>
</dbReference>
<dbReference type="InterPro" id="IPR027417">
    <property type="entry name" value="P-loop_NTPase"/>
</dbReference>
<dbReference type="InterPro" id="IPR003395">
    <property type="entry name" value="RecF/RecN/SMC_N"/>
</dbReference>
<dbReference type="InterPro" id="IPR042174">
    <property type="entry name" value="RecF_2"/>
</dbReference>
<dbReference type="NCBIfam" id="TIGR00611">
    <property type="entry name" value="recf"/>
    <property type="match status" value="1"/>
</dbReference>
<dbReference type="PANTHER" id="PTHR32182">
    <property type="entry name" value="DNA REPLICATION AND REPAIR PROTEIN RECF"/>
    <property type="match status" value="1"/>
</dbReference>
<dbReference type="PANTHER" id="PTHR32182:SF0">
    <property type="entry name" value="DNA REPLICATION AND REPAIR PROTEIN RECF"/>
    <property type="match status" value="1"/>
</dbReference>
<dbReference type="Pfam" id="PF02463">
    <property type="entry name" value="SMC_N"/>
    <property type="match status" value="1"/>
</dbReference>
<dbReference type="SUPFAM" id="SSF52540">
    <property type="entry name" value="P-loop containing nucleoside triphosphate hydrolases"/>
    <property type="match status" value="1"/>
</dbReference>
<dbReference type="PROSITE" id="PS00617">
    <property type="entry name" value="RECF_1"/>
    <property type="match status" value="1"/>
</dbReference>
<dbReference type="PROSITE" id="PS00618">
    <property type="entry name" value="RECF_2"/>
    <property type="match status" value="1"/>
</dbReference>
<accession>A6W3V7</accession>
<organism>
    <name type="scientific">Kineococcus radiotolerans (strain ATCC BAA-149 / DSM 14245 / SRS30216)</name>
    <dbReference type="NCBI Taxonomy" id="266940"/>
    <lineage>
        <taxon>Bacteria</taxon>
        <taxon>Bacillati</taxon>
        <taxon>Actinomycetota</taxon>
        <taxon>Actinomycetes</taxon>
        <taxon>Kineosporiales</taxon>
        <taxon>Kineosporiaceae</taxon>
        <taxon>Kineococcus</taxon>
    </lineage>
</organism>